<keyword id="KW-0002">3D-structure</keyword>
<keyword id="KW-0274">FAD</keyword>
<keyword id="KW-0285">Flavoprotein</keyword>
<keyword id="KW-0520">NAD</keyword>
<keyword id="KW-0521">NADP</keyword>
<keyword id="KW-0547">Nucleotide-binding</keyword>
<keyword id="KW-0560">Oxidoreductase</keyword>
<evidence type="ECO:0000269" key="1">
    <source>
    </source>
</evidence>
<evidence type="ECO:0000303" key="2">
    <source>
    </source>
</evidence>
<evidence type="ECO:0000305" key="3"/>
<evidence type="ECO:0000305" key="4">
    <source>
    </source>
</evidence>
<evidence type="ECO:0000312" key="5">
    <source>
        <dbReference type="EMBL" id="AAZ37485.1"/>
    </source>
</evidence>
<evidence type="ECO:0007829" key="6">
    <source>
        <dbReference type="PDB" id="4ZCD"/>
    </source>
</evidence>
<proteinExistence type="evidence at protein level"/>
<name>RNLS_PSE14</name>
<protein>
    <recommendedName>
        <fullName evidence="2">Renalase</fullName>
        <ecNumber evidence="1">1.6.3.5</ecNumber>
    </recommendedName>
</protein>
<comment type="function">
    <text evidence="1">Catalyzes the oxidation of the 1,2-dihydro- and 1,6-dihydro- isomeric forms of beta-NAD(P) back to beta-NAD(P)+. Has a preference for 1,2-dihydro-beta-NAD as substrate. May serve to protect primary metabolism dehydrogenases from inhibition by the 1,2-dihydro- and 1,6-dihydro-beta-NAD(P) isomers.</text>
</comment>
<comment type="catalytic activity">
    <reaction evidence="1">
        <text>1,2-dihydro-beta-NAD + O2 + H(+) = H2O2 + NAD(+)</text>
        <dbReference type="Rhea" id="RHEA:40395"/>
        <dbReference type="ChEBI" id="CHEBI:15378"/>
        <dbReference type="ChEBI" id="CHEBI:15379"/>
        <dbReference type="ChEBI" id="CHEBI:16240"/>
        <dbReference type="ChEBI" id="CHEBI:57540"/>
        <dbReference type="ChEBI" id="CHEBI:88138"/>
        <dbReference type="EC" id="1.6.3.5"/>
    </reaction>
</comment>
<comment type="catalytic activity">
    <reaction evidence="1">
        <text>1,2-dihydro-beta-NADP + O2 + H(+) = H2O2 + NADP(+)</text>
        <dbReference type="Rhea" id="RHEA:40399"/>
        <dbReference type="ChEBI" id="CHEBI:15378"/>
        <dbReference type="ChEBI" id="CHEBI:15379"/>
        <dbReference type="ChEBI" id="CHEBI:16240"/>
        <dbReference type="ChEBI" id="CHEBI:58349"/>
        <dbReference type="ChEBI" id="CHEBI:88137"/>
        <dbReference type="EC" id="1.6.3.5"/>
    </reaction>
</comment>
<comment type="catalytic activity">
    <reaction evidence="1">
        <text>1,6-dihydro-beta-NADP + O2 + H(+) = H2O2 + NADP(+)</text>
        <dbReference type="Rhea" id="RHEA:48000"/>
        <dbReference type="ChEBI" id="CHEBI:15378"/>
        <dbReference type="ChEBI" id="CHEBI:15379"/>
        <dbReference type="ChEBI" id="CHEBI:16240"/>
        <dbReference type="ChEBI" id="CHEBI:58349"/>
        <dbReference type="ChEBI" id="CHEBI:88139"/>
        <dbReference type="EC" id="1.6.3.5"/>
    </reaction>
</comment>
<comment type="catalytic activity">
    <reaction evidence="1">
        <text>1,6-dihydro-beta-NAD + O2 + H(+) = H2O2 + NAD(+)</text>
        <dbReference type="Rhea" id="RHEA:47996"/>
        <dbReference type="ChEBI" id="CHEBI:15378"/>
        <dbReference type="ChEBI" id="CHEBI:15379"/>
        <dbReference type="ChEBI" id="CHEBI:16240"/>
        <dbReference type="ChEBI" id="CHEBI:57540"/>
        <dbReference type="ChEBI" id="CHEBI:88140"/>
        <dbReference type="EC" id="1.6.3.5"/>
    </reaction>
</comment>
<comment type="cofactor">
    <cofactor evidence="1">
        <name>FAD</name>
        <dbReference type="ChEBI" id="CHEBI:57692"/>
    </cofactor>
</comment>
<comment type="similarity">
    <text evidence="3">Belongs to the bacterial renalase family.</text>
</comment>
<feature type="chain" id="PRO_0000437674" description="Renalase">
    <location>
        <begin position="1"/>
        <end position="328"/>
    </location>
</feature>
<feature type="binding site" evidence="1">
    <location>
        <position position="13"/>
    </location>
    <ligand>
        <name>FAD</name>
        <dbReference type="ChEBI" id="CHEBI:57692"/>
    </ligand>
</feature>
<feature type="binding site" evidence="1">
    <location>
        <begin position="32"/>
        <end position="33"/>
    </location>
    <ligand>
        <name>FAD</name>
        <dbReference type="ChEBI" id="CHEBI:57692"/>
    </ligand>
</feature>
<feature type="binding site" evidence="1">
    <location>
        <position position="40"/>
    </location>
    <ligand>
        <name>FAD</name>
        <dbReference type="ChEBI" id="CHEBI:57692"/>
    </ligand>
</feature>
<feature type="binding site" evidence="1">
    <location>
        <begin position="56"/>
        <end position="57"/>
    </location>
    <ligand>
        <name>FAD</name>
        <dbReference type="ChEBI" id="CHEBI:57692"/>
    </ligand>
</feature>
<feature type="binding site" evidence="4">
    <location>
        <begin position="57"/>
        <end position="61"/>
    </location>
    <ligand>
        <name>substrate</name>
    </ligand>
</feature>
<feature type="binding site" evidence="4">
    <location>
        <begin position="96"/>
        <end position="98"/>
    </location>
    <ligand>
        <name>substrate</name>
    </ligand>
</feature>
<feature type="binding site" evidence="1">
    <location>
        <position position="128"/>
    </location>
    <ligand>
        <name>FAD</name>
        <dbReference type="ChEBI" id="CHEBI:57692"/>
    </ligand>
</feature>
<feature type="binding site" evidence="4">
    <location>
        <position position="185"/>
    </location>
    <ligand>
        <name>substrate</name>
    </ligand>
</feature>
<feature type="binding site" evidence="1">
    <location>
        <position position="302"/>
    </location>
    <ligand>
        <name>FAD</name>
        <dbReference type="ChEBI" id="CHEBI:57692"/>
    </ligand>
</feature>
<feature type="binding site" evidence="4">
    <location>
        <position position="308"/>
    </location>
    <ligand>
        <name>substrate</name>
    </ligand>
</feature>
<feature type="binding site" evidence="1">
    <location>
        <position position="309"/>
    </location>
    <ligand>
        <name>FAD</name>
        <dbReference type="ChEBI" id="CHEBI:57692"/>
    </ligand>
</feature>
<feature type="strand" evidence="6">
    <location>
        <begin position="5"/>
        <end position="8"/>
    </location>
</feature>
<feature type="helix" evidence="6">
    <location>
        <begin position="12"/>
        <end position="23"/>
    </location>
</feature>
<feature type="strand" evidence="6">
    <location>
        <begin position="28"/>
        <end position="31"/>
    </location>
</feature>
<feature type="strand" evidence="6">
    <location>
        <begin position="33"/>
        <end position="37"/>
    </location>
</feature>
<feature type="helix" evidence="6">
    <location>
        <begin position="39"/>
        <end position="41"/>
    </location>
</feature>
<feature type="helix" evidence="6">
    <location>
        <begin position="63"/>
        <end position="74"/>
    </location>
</feature>
<feature type="strand" evidence="6">
    <location>
        <begin position="77"/>
        <end position="81"/>
    </location>
</feature>
<feature type="strand" evidence="6">
    <location>
        <begin position="85"/>
        <end position="89"/>
    </location>
</feature>
<feature type="strand" evidence="6">
    <location>
        <begin position="92"/>
        <end position="95"/>
    </location>
</feature>
<feature type="strand" evidence="6">
    <location>
        <begin position="102"/>
        <end position="107"/>
    </location>
</feature>
<feature type="helix" evidence="6">
    <location>
        <begin position="111"/>
        <end position="117"/>
    </location>
</feature>
<feature type="strand" evidence="6">
    <location>
        <begin position="128"/>
        <end position="133"/>
    </location>
</feature>
<feature type="strand" evidence="6">
    <location>
        <begin position="138"/>
        <end position="142"/>
    </location>
</feature>
<feature type="strand" evidence="6">
    <location>
        <begin position="147"/>
        <end position="152"/>
    </location>
</feature>
<feature type="strand" evidence="6">
    <location>
        <begin position="154"/>
        <end position="156"/>
    </location>
</feature>
<feature type="helix" evidence="6">
    <location>
        <begin position="160"/>
        <end position="163"/>
    </location>
</feature>
<feature type="helix" evidence="6">
    <location>
        <begin position="164"/>
        <end position="166"/>
    </location>
</feature>
<feature type="helix" evidence="6">
    <location>
        <begin position="171"/>
        <end position="178"/>
    </location>
</feature>
<feature type="strand" evidence="6">
    <location>
        <begin position="182"/>
        <end position="194"/>
    </location>
</feature>
<feature type="strand" evidence="6">
    <location>
        <begin position="202"/>
        <end position="205"/>
    </location>
</feature>
<feature type="strand" evidence="6">
    <location>
        <begin position="207"/>
        <end position="215"/>
    </location>
</feature>
<feature type="helix" evidence="6">
    <location>
        <begin position="216"/>
        <end position="218"/>
    </location>
</feature>
<feature type="strand" evidence="6">
    <location>
        <begin position="227"/>
        <end position="233"/>
    </location>
</feature>
<feature type="helix" evidence="6">
    <location>
        <begin position="235"/>
        <end position="240"/>
    </location>
</feature>
<feature type="turn" evidence="6">
    <location>
        <begin position="241"/>
        <end position="243"/>
    </location>
</feature>
<feature type="helix" evidence="6">
    <location>
        <begin position="246"/>
        <end position="260"/>
    </location>
</feature>
<feature type="strand" evidence="6">
    <location>
        <begin position="269"/>
        <end position="283"/>
    </location>
</feature>
<feature type="strand" evidence="6">
    <location>
        <begin position="290"/>
        <end position="292"/>
    </location>
</feature>
<feature type="turn" evidence="6">
    <location>
        <begin position="293"/>
        <end position="296"/>
    </location>
</feature>
<feature type="strand" evidence="6">
    <location>
        <begin position="297"/>
        <end position="299"/>
    </location>
</feature>
<feature type="helix" evidence="6">
    <location>
        <begin position="302"/>
        <end position="304"/>
    </location>
</feature>
<feature type="helix" evidence="6">
    <location>
        <begin position="309"/>
        <end position="326"/>
    </location>
</feature>
<gene>
    <name evidence="5" type="ordered locus">PSPPH_1014</name>
</gene>
<dbReference type="EC" id="1.6.3.5" evidence="1"/>
<dbReference type="EMBL" id="CP000058">
    <property type="protein sequence ID" value="AAZ37485.1"/>
    <property type="molecule type" value="Genomic_DNA"/>
</dbReference>
<dbReference type="RefSeq" id="WP_011167855.1">
    <property type="nucleotide sequence ID" value="NC_005773.3"/>
</dbReference>
<dbReference type="PDB" id="4ZCC">
    <property type="method" value="X-ray"/>
    <property type="resolution" value="2.00 A"/>
    <property type="chains" value="A/B/C/D=1-328"/>
</dbReference>
<dbReference type="PDB" id="4ZCD">
    <property type="method" value="X-ray"/>
    <property type="resolution" value="1.66 A"/>
    <property type="chains" value="A/B=1-328"/>
</dbReference>
<dbReference type="PDB" id="5KRQ">
    <property type="method" value="X-ray"/>
    <property type="resolution" value="2.09 A"/>
    <property type="chains" value="A/B=1-328"/>
</dbReference>
<dbReference type="PDBsum" id="4ZCC"/>
<dbReference type="PDBsum" id="4ZCD"/>
<dbReference type="PDBsum" id="5KRQ"/>
<dbReference type="SMR" id="Q48MT7"/>
<dbReference type="KEGG" id="psp:PSPPH_1014"/>
<dbReference type="eggNOG" id="COG3380">
    <property type="taxonomic scope" value="Bacteria"/>
</dbReference>
<dbReference type="HOGENOM" id="CLU_036034_0_0_6"/>
<dbReference type="BRENDA" id="1.6.3.5">
    <property type="organism ID" value="5174"/>
</dbReference>
<dbReference type="EvolutionaryTrace" id="Q48MT7"/>
<dbReference type="Proteomes" id="UP000000551">
    <property type="component" value="Chromosome"/>
</dbReference>
<dbReference type="GO" id="GO:0071949">
    <property type="term" value="F:FAD binding"/>
    <property type="evidence" value="ECO:0000314"/>
    <property type="project" value="UniProtKB"/>
</dbReference>
<dbReference type="GO" id="GO:0051287">
    <property type="term" value="F:NAD binding"/>
    <property type="evidence" value="ECO:0000314"/>
    <property type="project" value="UniProtKB"/>
</dbReference>
<dbReference type="GO" id="GO:0050661">
    <property type="term" value="F:NADP binding"/>
    <property type="evidence" value="ECO:0000314"/>
    <property type="project" value="UniProtKB"/>
</dbReference>
<dbReference type="GO" id="GO:0050664">
    <property type="term" value="F:oxidoreductase activity, acting on NAD(P)H, oxygen as acceptor"/>
    <property type="evidence" value="ECO:0000314"/>
    <property type="project" value="UniProtKB"/>
</dbReference>
<dbReference type="Gene3D" id="3.90.660.10">
    <property type="match status" value="1"/>
</dbReference>
<dbReference type="Gene3D" id="3.50.50.60">
    <property type="entry name" value="FAD/NAD(P)-binding domain"/>
    <property type="match status" value="1"/>
</dbReference>
<dbReference type="HAMAP" id="MF_02074">
    <property type="entry name" value="Bact_renalase"/>
    <property type="match status" value="1"/>
</dbReference>
<dbReference type="InterPro" id="IPR002937">
    <property type="entry name" value="Amino_oxidase"/>
</dbReference>
<dbReference type="InterPro" id="IPR034721">
    <property type="entry name" value="Bac_renal"/>
</dbReference>
<dbReference type="InterPro" id="IPR036188">
    <property type="entry name" value="FAD/NAD-bd_sf"/>
</dbReference>
<dbReference type="PANTHER" id="PTHR16128">
    <property type="entry name" value="FAD/NAD(P)-BINDING OXIDOREDUCTASE FAMILY PROTEIN"/>
    <property type="match status" value="1"/>
</dbReference>
<dbReference type="PANTHER" id="PTHR16128:SF5">
    <property type="entry name" value="FAD_NAD(P)-BINDING OXIDOREDUCTASE FAMILY PROTEIN"/>
    <property type="match status" value="1"/>
</dbReference>
<dbReference type="Pfam" id="PF01593">
    <property type="entry name" value="Amino_oxidase"/>
    <property type="match status" value="1"/>
</dbReference>
<dbReference type="Pfam" id="PF13450">
    <property type="entry name" value="NAD_binding_8"/>
    <property type="match status" value="1"/>
</dbReference>
<dbReference type="PRINTS" id="PR00419">
    <property type="entry name" value="ADXRDTASE"/>
</dbReference>
<dbReference type="SUPFAM" id="SSF51905">
    <property type="entry name" value="FAD/NAD(P)-binding domain"/>
    <property type="match status" value="1"/>
</dbReference>
<sequence length="328" mass="35712">MTVPIAIIGTGIAGLSAAQALTSAGHQVHLFDKSRGSGGRMSSKRSDAGSLDMGAQYFTARDRRFATAVKQWQAQGHVSEWTPLLYNFHGGRLSPSPDEQVRWVGEPGMSAITRAMRGDLPVSFSCRITDVFRGEQHWNLLDAEGENHGPFSHVIIATPAPQATALLAAAPKLASVVAGVKMDPTWAVALAFETPLQTPMQGCFVQDSPLDWLARNRSKPGRDDTLDSWVLHATSQWSRQNLDASREQVIEHLHGAFAELIDCAMPAPVFSLAHRWLYARPAGSHEWGALSDADLGIYVCGDWCLSGRVEGAWLSGQEAARRLLEHLQ</sequence>
<reference key="1">
    <citation type="journal article" date="2005" name="J. Bacteriol.">
        <title>Whole-genome sequence analysis of Pseudomonas syringae pv. phaseolicola 1448A reveals divergence among pathovars in genes involved in virulence and transposition.</title>
        <authorList>
            <person name="Joardar V."/>
            <person name="Lindeberg M."/>
            <person name="Jackson R.W."/>
            <person name="Selengut J."/>
            <person name="Dodson R."/>
            <person name="Brinkac L.M."/>
            <person name="Daugherty S.C."/>
            <person name="DeBoy R.T."/>
            <person name="Durkin A.S."/>
            <person name="Gwinn Giglio M."/>
            <person name="Madupu R."/>
            <person name="Nelson W.C."/>
            <person name="Rosovitz M.J."/>
            <person name="Sullivan S.A."/>
            <person name="Crabtree J."/>
            <person name="Creasy T."/>
            <person name="Davidsen T.M."/>
            <person name="Haft D.H."/>
            <person name="Zafar N."/>
            <person name="Zhou L."/>
            <person name="Halpin R."/>
            <person name="Holley T."/>
            <person name="Khouri H.M."/>
            <person name="Feldblyum T.V."/>
            <person name="White O."/>
            <person name="Fraser C.M."/>
            <person name="Chatterjee A.K."/>
            <person name="Cartinhour S."/>
            <person name="Schneider D."/>
            <person name="Mansfield J.W."/>
            <person name="Collmer A."/>
            <person name="Buell R."/>
        </authorList>
    </citation>
    <scope>NUCLEOTIDE SEQUENCE [LARGE SCALE GENOMIC DNA]</scope>
    <source>
        <strain>1448A / Race 6</strain>
    </source>
</reference>
<reference key="2">
    <citation type="journal article" date="2015" name="Biochemistry">
        <title>Bacterial renalase: structure and kinetics of an enzyme with 2- and 6-dihydro-beta-NAD(P) oxidase activity from Pseudomonas phaseolicola.</title>
        <authorList>
            <person name="Hoag M.R."/>
            <person name="Roman J."/>
            <person name="Beaupre B.A."/>
            <person name="Silvaggi N.R."/>
            <person name="Moran G.R."/>
        </authorList>
    </citation>
    <scope>X-RAY CRYSTALLOGRAPHY (1.66 ANGSTROMS) IN COMPLEXES WITH BETA-NADH; BETA-NAD(+) AND FAD</scope>
    <scope>FUNCTION</scope>
    <scope>CATALYTIC ACTIVITY</scope>
    <scope>COFACTOR</scope>
    <scope>SUBSTRATE SPECIFICITY</scope>
    <source>
        <strain>1448A / Race 6</strain>
    </source>
</reference>
<organism>
    <name type="scientific">Pseudomonas savastanoi pv. phaseolicola (strain 1448A / Race 6)</name>
    <name type="common">Pseudomonas syringae pv. phaseolicola (strain 1448A / Race 6)</name>
    <dbReference type="NCBI Taxonomy" id="264730"/>
    <lineage>
        <taxon>Bacteria</taxon>
        <taxon>Pseudomonadati</taxon>
        <taxon>Pseudomonadota</taxon>
        <taxon>Gammaproteobacteria</taxon>
        <taxon>Pseudomonadales</taxon>
        <taxon>Pseudomonadaceae</taxon>
        <taxon>Pseudomonas</taxon>
    </lineage>
</organism>
<accession>Q48MT7</accession>